<feature type="chain" id="PRO_1000119451" description="Homoserine O-succinyltransferase">
    <location>
        <begin position="1"/>
        <end position="309"/>
    </location>
</feature>
<feature type="active site" description="Acyl-thioester intermediate" evidence="1">
    <location>
        <position position="142"/>
    </location>
</feature>
<feature type="active site" description="Proton acceptor" evidence="1">
    <location>
        <position position="235"/>
    </location>
</feature>
<feature type="active site" evidence="1">
    <location>
        <position position="237"/>
    </location>
</feature>
<feature type="binding site" evidence="1">
    <location>
        <position position="163"/>
    </location>
    <ligand>
        <name>substrate</name>
    </ligand>
</feature>
<feature type="binding site" evidence="1">
    <location>
        <position position="192"/>
    </location>
    <ligand>
        <name>substrate</name>
    </ligand>
</feature>
<feature type="binding site" evidence="1">
    <location>
        <position position="249"/>
    </location>
    <ligand>
        <name>substrate</name>
    </ligand>
</feature>
<feature type="site" description="Important for acyl-CoA specificity" evidence="1">
    <location>
        <position position="111"/>
    </location>
</feature>
<feature type="site" description="Important for substrate specificity" evidence="1">
    <location>
        <position position="192"/>
    </location>
</feature>
<proteinExistence type="inferred from homology"/>
<sequence length="309" mass="35757">MPIRVPDELPAVNFLREENVFVMTTSRASGQEIRPLKVLILNLMPKKIETENQFLRLLSNSPLQVDIQLLRIDSRESRNTPAEHLNNFYCNFEDIQEQNFDGLIVTGAPLGLVEFNDVAYWPQIKQVLEWSKDHVTSTLFVCWAVQAALNILYGIPKQTRTDKLSGVYEHHILHPHALLTRGFDDSFLAPHSRYADFPAALIRDYTDLEILAETEEGDAYLFASKDKRIAFVTGHPEYDAQTLAQEYFRDVEAGLDPEVPYNYFPHNDPQNTPRASWRSHGNLLFTNWLNYYVYQITPYDLRHMNPTLD</sequence>
<reference key="1">
    <citation type="journal article" date="2009" name="PLoS Genet.">
        <title>Organised genome dynamics in the Escherichia coli species results in highly diverse adaptive paths.</title>
        <authorList>
            <person name="Touchon M."/>
            <person name="Hoede C."/>
            <person name="Tenaillon O."/>
            <person name="Barbe V."/>
            <person name="Baeriswyl S."/>
            <person name="Bidet P."/>
            <person name="Bingen E."/>
            <person name="Bonacorsi S."/>
            <person name="Bouchier C."/>
            <person name="Bouvet O."/>
            <person name="Calteau A."/>
            <person name="Chiapello H."/>
            <person name="Clermont O."/>
            <person name="Cruveiller S."/>
            <person name="Danchin A."/>
            <person name="Diard M."/>
            <person name="Dossat C."/>
            <person name="Karoui M.E."/>
            <person name="Frapy E."/>
            <person name="Garry L."/>
            <person name="Ghigo J.M."/>
            <person name="Gilles A.M."/>
            <person name="Johnson J."/>
            <person name="Le Bouguenec C."/>
            <person name="Lescat M."/>
            <person name="Mangenot S."/>
            <person name="Martinez-Jehanne V."/>
            <person name="Matic I."/>
            <person name="Nassif X."/>
            <person name="Oztas S."/>
            <person name="Petit M.A."/>
            <person name="Pichon C."/>
            <person name="Rouy Z."/>
            <person name="Ruf C.S."/>
            <person name="Schneider D."/>
            <person name="Tourret J."/>
            <person name="Vacherie B."/>
            <person name="Vallenet D."/>
            <person name="Medigue C."/>
            <person name="Rocha E.P.C."/>
            <person name="Denamur E."/>
        </authorList>
    </citation>
    <scope>NUCLEOTIDE SEQUENCE [LARGE SCALE GENOMIC DNA]</scope>
    <source>
        <strain>UMN026 / ExPEC</strain>
    </source>
</reference>
<evidence type="ECO:0000255" key="1">
    <source>
        <dbReference type="HAMAP-Rule" id="MF_00295"/>
    </source>
</evidence>
<protein>
    <recommendedName>
        <fullName evidence="1">Homoserine O-succinyltransferase</fullName>
        <shortName evidence="1">HST</shortName>
        <ecNumber evidence="1">2.3.1.46</ecNumber>
    </recommendedName>
    <alternativeName>
        <fullName evidence="1">Homoserine transsuccinylase</fullName>
        <shortName evidence="1">HTS</shortName>
    </alternativeName>
</protein>
<accession>B7NFU9</accession>
<dbReference type="EC" id="2.3.1.46" evidence="1"/>
<dbReference type="EMBL" id="CU928163">
    <property type="protein sequence ID" value="CAR15656.1"/>
    <property type="molecule type" value="Genomic_DNA"/>
</dbReference>
<dbReference type="RefSeq" id="YP_002415146.1">
    <property type="nucleotide sequence ID" value="NC_011751.1"/>
</dbReference>
<dbReference type="SMR" id="B7NFU9"/>
<dbReference type="STRING" id="585056.ECUMN_4539"/>
<dbReference type="KEGG" id="eum:ECUMN_4539"/>
<dbReference type="PATRIC" id="fig|585056.7.peg.4703"/>
<dbReference type="HOGENOM" id="CLU_057851_0_1_6"/>
<dbReference type="UniPathway" id="UPA00051">
    <property type="reaction ID" value="UER00075"/>
</dbReference>
<dbReference type="Proteomes" id="UP000007097">
    <property type="component" value="Chromosome"/>
</dbReference>
<dbReference type="GO" id="GO:0005737">
    <property type="term" value="C:cytoplasm"/>
    <property type="evidence" value="ECO:0007669"/>
    <property type="project" value="UniProtKB-SubCell"/>
</dbReference>
<dbReference type="GO" id="GO:0004414">
    <property type="term" value="F:homoserine O-acetyltransferase activity"/>
    <property type="evidence" value="ECO:0007669"/>
    <property type="project" value="UniProtKB-UniRule"/>
</dbReference>
<dbReference type="GO" id="GO:0008899">
    <property type="term" value="F:homoserine O-succinyltransferase activity"/>
    <property type="evidence" value="ECO:0007669"/>
    <property type="project" value="UniProtKB-EC"/>
</dbReference>
<dbReference type="GO" id="GO:0019281">
    <property type="term" value="P:L-methionine biosynthetic process from homoserine via O-succinyl-L-homoserine and cystathionine"/>
    <property type="evidence" value="ECO:0007669"/>
    <property type="project" value="InterPro"/>
</dbReference>
<dbReference type="CDD" id="cd03131">
    <property type="entry name" value="GATase1_HTS"/>
    <property type="match status" value="1"/>
</dbReference>
<dbReference type="FunFam" id="3.40.50.880:FF:000004">
    <property type="entry name" value="Homoserine O-succinyltransferase"/>
    <property type="match status" value="1"/>
</dbReference>
<dbReference type="Gene3D" id="3.40.50.880">
    <property type="match status" value="1"/>
</dbReference>
<dbReference type="HAMAP" id="MF_00295">
    <property type="entry name" value="MetA_acyltransf"/>
    <property type="match status" value="1"/>
</dbReference>
<dbReference type="InterPro" id="IPR029062">
    <property type="entry name" value="Class_I_gatase-like"/>
</dbReference>
<dbReference type="InterPro" id="IPR005697">
    <property type="entry name" value="HST_MetA"/>
</dbReference>
<dbReference type="InterPro" id="IPR033752">
    <property type="entry name" value="MetA_family"/>
</dbReference>
<dbReference type="NCBIfam" id="TIGR01001">
    <property type="entry name" value="metA"/>
    <property type="match status" value="1"/>
</dbReference>
<dbReference type="PANTHER" id="PTHR20919">
    <property type="entry name" value="HOMOSERINE O-SUCCINYLTRANSFERASE"/>
    <property type="match status" value="1"/>
</dbReference>
<dbReference type="PANTHER" id="PTHR20919:SF0">
    <property type="entry name" value="HOMOSERINE O-SUCCINYLTRANSFERASE"/>
    <property type="match status" value="1"/>
</dbReference>
<dbReference type="Pfam" id="PF04204">
    <property type="entry name" value="HTS"/>
    <property type="match status" value="1"/>
</dbReference>
<dbReference type="PIRSF" id="PIRSF000450">
    <property type="entry name" value="H_ser_succinyltr"/>
    <property type="match status" value="1"/>
</dbReference>
<dbReference type="SUPFAM" id="SSF52317">
    <property type="entry name" value="Class I glutamine amidotransferase-like"/>
    <property type="match status" value="1"/>
</dbReference>
<comment type="function">
    <text evidence="1">Transfers a succinyl group from succinyl-CoA to L-homoserine, forming succinyl-L-homoserine.</text>
</comment>
<comment type="catalytic activity">
    <reaction evidence="1">
        <text>L-homoserine + succinyl-CoA = O-succinyl-L-homoserine + CoA</text>
        <dbReference type="Rhea" id="RHEA:22008"/>
        <dbReference type="ChEBI" id="CHEBI:57287"/>
        <dbReference type="ChEBI" id="CHEBI:57292"/>
        <dbReference type="ChEBI" id="CHEBI:57476"/>
        <dbReference type="ChEBI" id="CHEBI:57661"/>
        <dbReference type="EC" id="2.3.1.46"/>
    </reaction>
</comment>
<comment type="pathway">
    <text evidence="1">Amino-acid biosynthesis; L-methionine biosynthesis via de novo pathway; O-succinyl-L-homoserine from L-homoserine: step 1/1.</text>
</comment>
<comment type="subunit">
    <text evidence="1">Homodimer.</text>
</comment>
<comment type="subcellular location">
    <subcellularLocation>
        <location evidence="1">Cytoplasm</location>
    </subcellularLocation>
</comment>
<comment type="similarity">
    <text evidence="1">Belongs to the MetA family.</text>
</comment>
<name>METAS_ECOLU</name>
<keyword id="KW-0012">Acyltransferase</keyword>
<keyword id="KW-0028">Amino-acid biosynthesis</keyword>
<keyword id="KW-0963">Cytoplasm</keyword>
<keyword id="KW-0486">Methionine biosynthesis</keyword>
<keyword id="KW-0808">Transferase</keyword>
<organism>
    <name type="scientific">Escherichia coli O17:K52:H18 (strain UMN026 / ExPEC)</name>
    <dbReference type="NCBI Taxonomy" id="585056"/>
    <lineage>
        <taxon>Bacteria</taxon>
        <taxon>Pseudomonadati</taxon>
        <taxon>Pseudomonadota</taxon>
        <taxon>Gammaproteobacteria</taxon>
        <taxon>Enterobacterales</taxon>
        <taxon>Enterobacteriaceae</taxon>
        <taxon>Escherichia</taxon>
    </lineage>
</organism>
<gene>
    <name evidence="1" type="primary">metAS</name>
    <name type="ordered locus">ECUMN_4539</name>
</gene>